<gene>
    <name type="primary">casp1-a</name>
    <name type="synonym">casp1a</name>
</gene>
<proteinExistence type="evidence at transcript level"/>
<name>CAS1A_XENLA</name>
<protein>
    <recommendedName>
        <fullName>Caspase-1-A</fullName>
        <shortName>CASP-1-A</shortName>
        <ecNumber evidence="1">3.4.22.36</ecNumber>
    </recommendedName>
    <alternativeName>
        <fullName>Interleukin-1 beta convertase homolog A</fullName>
        <shortName>xICE-A</shortName>
    </alternativeName>
    <component>
        <recommendedName>
            <fullName evidence="1">Caspase-1 subunit p20</fullName>
        </recommendedName>
    </component>
    <component>
        <recommendedName>
            <fullName evidence="1">Caspase-1 subunit p10</fullName>
        </recommendedName>
    </component>
</protein>
<organism>
    <name type="scientific">Xenopus laevis</name>
    <name type="common">African clawed frog</name>
    <dbReference type="NCBI Taxonomy" id="8355"/>
    <lineage>
        <taxon>Eukaryota</taxon>
        <taxon>Metazoa</taxon>
        <taxon>Chordata</taxon>
        <taxon>Craniata</taxon>
        <taxon>Vertebrata</taxon>
        <taxon>Euteleostomi</taxon>
        <taxon>Amphibia</taxon>
        <taxon>Batrachia</taxon>
        <taxon>Anura</taxon>
        <taxon>Pipoidea</taxon>
        <taxon>Pipidae</taxon>
        <taxon>Xenopodinae</taxon>
        <taxon>Xenopus</taxon>
        <taxon>Xenopus</taxon>
    </lineage>
</organism>
<dbReference type="EC" id="3.4.22.36" evidence="1"/>
<dbReference type="EMBL" id="D89783">
    <property type="protein sequence ID" value="BAA14017.1"/>
    <property type="molecule type" value="mRNA"/>
</dbReference>
<dbReference type="EMBL" id="BC129548">
    <property type="protein sequence ID" value="AAI29549.1"/>
    <property type="molecule type" value="mRNA"/>
</dbReference>
<dbReference type="RefSeq" id="NP_001081223.1">
    <property type="nucleotide sequence ID" value="NM_001087754.1"/>
</dbReference>
<dbReference type="SMR" id="P55865"/>
<dbReference type="DNASU" id="397719"/>
<dbReference type="GeneID" id="397719"/>
<dbReference type="KEGG" id="xla:397719"/>
<dbReference type="AGR" id="Xenbase:XB-GENE-6252623"/>
<dbReference type="CTD" id="397719"/>
<dbReference type="Xenbase" id="XB-GENE-6252623">
    <property type="gene designation" value="casp1.L"/>
</dbReference>
<dbReference type="OMA" id="LICNIDF"/>
<dbReference type="OrthoDB" id="6097640at2759"/>
<dbReference type="Proteomes" id="UP000186698">
    <property type="component" value="Chromosome 2L"/>
</dbReference>
<dbReference type="Bgee" id="397719">
    <property type="expression patterns" value="Expressed in spleen and 20 other cell types or tissues"/>
</dbReference>
<dbReference type="GO" id="GO:0097169">
    <property type="term" value="C:AIM2 inflammasome complex"/>
    <property type="evidence" value="ECO:0000318"/>
    <property type="project" value="GO_Central"/>
</dbReference>
<dbReference type="GO" id="GO:0072557">
    <property type="term" value="C:IPAF inflammasome complex"/>
    <property type="evidence" value="ECO:0000318"/>
    <property type="project" value="GO_Central"/>
</dbReference>
<dbReference type="GO" id="GO:0072559">
    <property type="term" value="C:NLRP3 inflammasome complex"/>
    <property type="evidence" value="ECO:0000318"/>
    <property type="project" value="GO_Central"/>
</dbReference>
<dbReference type="GO" id="GO:0005886">
    <property type="term" value="C:plasma membrane"/>
    <property type="evidence" value="ECO:0007669"/>
    <property type="project" value="UniProtKB-SubCell"/>
</dbReference>
<dbReference type="GO" id="GO:0004197">
    <property type="term" value="F:cysteine-type endopeptidase activity"/>
    <property type="evidence" value="ECO:0000250"/>
    <property type="project" value="UniProtKB"/>
</dbReference>
<dbReference type="GO" id="GO:0001819">
    <property type="term" value="P:positive regulation of cytokine production"/>
    <property type="evidence" value="ECO:0000250"/>
    <property type="project" value="UniProtKB"/>
</dbReference>
<dbReference type="GO" id="GO:0032731">
    <property type="term" value="P:positive regulation of interleukin-1 beta production"/>
    <property type="evidence" value="ECO:0000250"/>
    <property type="project" value="UniProtKB"/>
</dbReference>
<dbReference type="GO" id="GO:0016540">
    <property type="term" value="P:protein autoprocessing"/>
    <property type="evidence" value="ECO:0000250"/>
    <property type="project" value="UniProtKB"/>
</dbReference>
<dbReference type="GO" id="GO:0070269">
    <property type="term" value="P:pyroptotic inflammatory response"/>
    <property type="evidence" value="ECO:0000250"/>
    <property type="project" value="UniProtKB"/>
</dbReference>
<dbReference type="GO" id="GO:0042981">
    <property type="term" value="P:regulation of apoptotic process"/>
    <property type="evidence" value="ECO:0007669"/>
    <property type="project" value="InterPro"/>
</dbReference>
<dbReference type="GO" id="GO:0050727">
    <property type="term" value="P:regulation of inflammatory response"/>
    <property type="evidence" value="ECO:0000250"/>
    <property type="project" value="UniProtKB"/>
</dbReference>
<dbReference type="CDD" id="cd08325">
    <property type="entry name" value="CARD_CASP1-like"/>
    <property type="match status" value="1"/>
</dbReference>
<dbReference type="CDD" id="cd00032">
    <property type="entry name" value="CASc"/>
    <property type="match status" value="1"/>
</dbReference>
<dbReference type="FunFam" id="3.30.70.1470:FF:000003">
    <property type="entry name" value="Caspase-1"/>
    <property type="match status" value="1"/>
</dbReference>
<dbReference type="FunFam" id="3.40.50.1460:FF:000007">
    <property type="entry name" value="Caspase-1"/>
    <property type="match status" value="1"/>
</dbReference>
<dbReference type="Gene3D" id="3.40.50.1460">
    <property type="match status" value="1"/>
</dbReference>
<dbReference type="Gene3D" id="1.10.533.10">
    <property type="entry name" value="Death Domain, Fas"/>
    <property type="match status" value="1"/>
</dbReference>
<dbReference type="InterPro" id="IPR001315">
    <property type="entry name" value="CARD"/>
</dbReference>
<dbReference type="InterPro" id="IPR029030">
    <property type="entry name" value="Caspase-like_dom_sf"/>
</dbReference>
<dbReference type="InterPro" id="IPR033139">
    <property type="entry name" value="Caspase_cys_AS"/>
</dbReference>
<dbReference type="InterPro" id="IPR016129">
    <property type="entry name" value="Caspase_his_AS"/>
</dbReference>
<dbReference type="InterPro" id="IPR011029">
    <property type="entry name" value="DEATH-like_dom_sf"/>
</dbReference>
<dbReference type="InterPro" id="IPR002398">
    <property type="entry name" value="Pept_C14"/>
</dbReference>
<dbReference type="InterPro" id="IPR011600">
    <property type="entry name" value="Pept_C14_caspase"/>
</dbReference>
<dbReference type="InterPro" id="IPR002138">
    <property type="entry name" value="Pept_C14_p10"/>
</dbReference>
<dbReference type="InterPro" id="IPR001309">
    <property type="entry name" value="Pept_C14_p20"/>
</dbReference>
<dbReference type="InterPro" id="IPR015917">
    <property type="entry name" value="Pept_C14A"/>
</dbReference>
<dbReference type="PANTHER" id="PTHR47901">
    <property type="entry name" value="CASPASE RECRUITMENT DOMAIN-CONTAINING PROTEIN 18"/>
    <property type="match status" value="1"/>
</dbReference>
<dbReference type="PANTHER" id="PTHR47901:SF3">
    <property type="entry name" value="CASPASE-1"/>
    <property type="match status" value="1"/>
</dbReference>
<dbReference type="Pfam" id="PF00619">
    <property type="entry name" value="CARD"/>
    <property type="match status" value="1"/>
</dbReference>
<dbReference type="Pfam" id="PF00656">
    <property type="entry name" value="Peptidase_C14"/>
    <property type="match status" value="1"/>
</dbReference>
<dbReference type="PIRSF" id="PIRSF038001">
    <property type="entry name" value="Caspase_ICE"/>
    <property type="match status" value="1"/>
</dbReference>
<dbReference type="PRINTS" id="PR00376">
    <property type="entry name" value="IL1BCENZYME"/>
</dbReference>
<dbReference type="SMART" id="SM00114">
    <property type="entry name" value="CARD"/>
    <property type="match status" value="1"/>
</dbReference>
<dbReference type="SMART" id="SM00115">
    <property type="entry name" value="CASc"/>
    <property type="match status" value="1"/>
</dbReference>
<dbReference type="SUPFAM" id="SSF52129">
    <property type="entry name" value="Caspase-like"/>
    <property type="match status" value="1"/>
</dbReference>
<dbReference type="SUPFAM" id="SSF47986">
    <property type="entry name" value="DEATH domain"/>
    <property type="match status" value="1"/>
</dbReference>
<dbReference type="PROSITE" id="PS50209">
    <property type="entry name" value="CARD"/>
    <property type="match status" value="1"/>
</dbReference>
<dbReference type="PROSITE" id="PS01122">
    <property type="entry name" value="CASPASE_CYS"/>
    <property type="match status" value="1"/>
</dbReference>
<dbReference type="PROSITE" id="PS01121">
    <property type="entry name" value="CASPASE_HIS"/>
    <property type="match status" value="1"/>
</dbReference>
<dbReference type="PROSITE" id="PS50207">
    <property type="entry name" value="CASPASE_P10"/>
    <property type="match status" value="1"/>
</dbReference>
<dbReference type="PROSITE" id="PS50208">
    <property type="entry name" value="CASPASE_P20"/>
    <property type="match status" value="1"/>
</dbReference>
<sequence>MTAQLNKVRRAIIDGCNPAMISDLLDDLREKNVLVDSEVEHIKESNNTNRDRCRAMIDSVKKKGDDPSNILLESLVKNHKTLAKSLGLHEPPMAPVPIQEHNADTIKNKDIKGVIPCSAEEFKKIQDTQGDKIYDVRKREGRKGLALIICNEKFENLNERHGAKVDLDGMTKLLNELGYQVHPHTNLTKTEMVKVMKEFAAQEEHADSDSTFIVLMSHGDRQGVCGTDSKKTEKEKGQYEVTNLLEIDEIFSTFNNVNCSKLRNKPKVIIIQACRGENKGGLLVRDDVASPPLEDDGLHFVQREADFICFCSSTPDTVSWRDPTKGSVFITHLIEKMNEYAHCQPLGDIFLEVQSLFKDKCPNSRSQMPTQERCTLTKKFYLFPGY</sequence>
<feature type="propeptide" id="PRO_0000004537" evidence="2">
    <location>
        <begin position="1"/>
        <end position="100"/>
    </location>
</feature>
<feature type="chain" id="PRO_0000451686" description="Caspase-1 subunit p20" evidence="1">
    <location>
        <begin position="101"/>
        <end position="286"/>
    </location>
</feature>
<feature type="propeptide" id="PRO_0000451687" evidence="1">
    <location>
        <begin position="287"/>
        <end position="296"/>
    </location>
</feature>
<feature type="chain" id="PRO_0000451688" description="Caspase-1 subunit p10" evidence="1">
    <location>
        <begin position="297"/>
        <end position="386"/>
    </location>
</feature>
<feature type="domain" description="CARD" evidence="3">
    <location>
        <begin position="22"/>
        <end position="88"/>
    </location>
</feature>
<feature type="active site" evidence="1">
    <location>
        <position position="218"/>
    </location>
</feature>
<feature type="active site" evidence="1">
    <location>
        <position position="274"/>
    </location>
</feature>
<reference key="1">
    <citation type="journal article" date="1997" name="J. Biol. Chem.">
        <title>Induction of apoptosis and CPP32 expression by thyroid hormone in a myoblastic cell line derived from tadpole tail.</title>
        <authorList>
            <person name="Yaoita Y."/>
            <person name="Nakajima K."/>
        </authorList>
    </citation>
    <scope>NUCLEOTIDE SEQUENCE [MRNA]</scope>
</reference>
<reference key="2">
    <citation type="submission" date="2006-12" db="EMBL/GenBank/DDBJ databases">
        <authorList>
            <consortium name="NIH - Xenopus Gene Collection (XGC) project"/>
        </authorList>
    </citation>
    <scope>NUCLEOTIDE SEQUENCE [LARGE SCALE MRNA]</scope>
    <source>
        <tissue>Spleen</tissue>
    </source>
</reference>
<keyword id="KW-1003">Cell membrane</keyword>
<keyword id="KW-0963">Cytoplasm</keyword>
<keyword id="KW-0378">Hydrolase</keyword>
<keyword id="KW-0472">Membrane</keyword>
<keyword id="KW-0645">Protease</keyword>
<keyword id="KW-1185">Reference proteome</keyword>
<keyword id="KW-0788">Thiol protease</keyword>
<keyword id="KW-0865">Zymogen</keyword>
<evidence type="ECO:0000250" key="1">
    <source>
        <dbReference type="UniProtKB" id="P29466"/>
    </source>
</evidence>
<evidence type="ECO:0000255" key="2"/>
<evidence type="ECO:0000255" key="3">
    <source>
        <dbReference type="PROSITE-ProRule" id="PRU00046"/>
    </source>
</evidence>
<evidence type="ECO:0000305" key="4"/>
<accession>P55865</accession>
<accession>A2VD67</accession>
<comment type="function">
    <text evidence="1">Thiol protease involved in a variety of inflammatory processes by proteolytically cleaving other proteins, such as the precursors of the inflammatory cytokines interleukin-1 beta (IL1B) and interleukin 18 (IL18) as well as the pyroptosis inducer Gasdermin-D (GSDMD), into active mature peptides. Plays a key role in cell immunity as an inflammatory response initiator: once activated through formation of an inflammasome complex, it initiates a pro-inflammatory response through the cleavage of the two inflammatory cytokines IL1B and IL18, releasing the mature cytokines which are involved in a variety of inflammatory processes. Cleaves a tetrapeptide after an Asp residue at position P1. Also initiates pyroptosis, a programmed lytic cell death pathway, through cleavage of GSDMD.</text>
</comment>
<comment type="catalytic activity">
    <reaction evidence="1">
        <text>Strict requirement for an Asp residue at position P1 and has a preferred cleavage sequence of Tyr-Val-Ala-Asp-|-.</text>
        <dbReference type="EC" id="3.4.22.36"/>
    </reaction>
</comment>
<comment type="subunit">
    <text evidence="1">Heterotetramer that consists of two anti-parallel arranged heterodimers, each one formed by a 20 kDa (Caspase-1 subunit p20) and a 10 kDa (Caspase-1 subunit p10) subunit.</text>
</comment>
<comment type="subunit">
    <molecule>Caspase-1 subunit p20</molecule>
    <text evidence="1">Heterotetramer that consists of two anti-parallel arranged heterodimers, each one formed by a 20 kDa (Caspase-1 subunit p20) and a 10 kDa (Caspase-1 subunit p10) subunit. Can form a heterodimer with isoform epsilon which then has an inhibitory effect.</text>
</comment>
<comment type="subunit">
    <molecule>Caspase-1 subunit p10</molecule>
    <text evidence="1">Heterotetramer that consists of two anti-parallel arranged heterodimers, each one formed by a 20 kDa (Caspase-1 subunit p20) and a 10 kDa (Caspase-1 subunit p10) subunit.</text>
</comment>
<comment type="subcellular location">
    <subcellularLocation>
        <location evidence="1">Cytoplasm</location>
    </subcellularLocation>
    <subcellularLocation>
        <location evidence="1">Cell membrane</location>
    </subcellularLocation>
</comment>
<comment type="PTM">
    <text evidence="1">The two subunits are derived from the precursor sequence by an autocatalytic mechanism.</text>
</comment>
<comment type="similarity">
    <text evidence="4">Belongs to the peptidase C14A family.</text>
</comment>